<organismHost>
    <name type="scientific">Homo sapiens</name>
    <name type="common">Human</name>
    <dbReference type="NCBI Taxonomy" id="9606"/>
</organismHost>
<feature type="chain" id="PRO_0000142858" description="Major surface glycoprotein G">
    <location>
        <begin position="1"/>
        <end position="297"/>
    </location>
</feature>
<feature type="chain" id="PRO_0000451327" description="Mature secreted glycoprotein G">
    <location>
        <begin position="66"/>
        <end position="297"/>
    </location>
</feature>
<feature type="topological domain" description="Cytoplasmic" evidence="3">
    <location>
        <begin position="1"/>
        <end position="37"/>
    </location>
</feature>
<feature type="transmembrane region" description="Helical" evidence="3">
    <location>
        <begin position="38"/>
        <end position="66"/>
    </location>
</feature>
<feature type="topological domain" description="Extracellular" evidence="3">
    <location>
        <begin position="67"/>
        <end position="297"/>
    </location>
</feature>
<feature type="region of interest" description="Disordered" evidence="4">
    <location>
        <begin position="133"/>
        <end position="161"/>
    </location>
</feature>
<feature type="region of interest" description="Binding to host heparan sulfate" evidence="1">
    <location>
        <begin position="187"/>
        <end position="198"/>
    </location>
</feature>
<feature type="region of interest" description="Disordered" evidence="4">
    <location>
        <begin position="191"/>
        <end position="297"/>
    </location>
</feature>
<feature type="compositionally biased region" description="Polar residues" evidence="4">
    <location>
        <begin position="133"/>
        <end position="155"/>
    </location>
</feature>
<feature type="compositionally biased region" description="Basic residues" evidence="4">
    <location>
        <begin position="191"/>
        <end position="207"/>
    </location>
</feature>
<feature type="compositionally biased region" description="Basic and acidic residues" evidence="4">
    <location>
        <begin position="211"/>
        <end position="232"/>
    </location>
</feature>
<feature type="compositionally biased region" description="Low complexity" evidence="4">
    <location>
        <begin position="233"/>
        <end position="249"/>
    </location>
</feature>
<feature type="compositionally biased region" description="Polar residues" evidence="4">
    <location>
        <begin position="250"/>
        <end position="282"/>
    </location>
</feature>
<feature type="compositionally biased region" description="Pro residues" evidence="4">
    <location>
        <begin position="286"/>
        <end position="297"/>
    </location>
</feature>
<feature type="site" description="Cleavage" evidence="1">
    <location>
        <begin position="65"/>
        <end position="66"/>
    </location>
</feature>
<feature type="glycosylation site" description="O-linked (GalNAc...) threonine; by host" evidence="1">
    <location>
        <position position="70"/>
    </location>
</feature>
<feature type="glycosylation site" description="O-linked (GalNAc...) threonine; by host" evidence="1">
    <location>
        <position position="72"/>
    </location>
</feature>
<feature type="glycosylation site" description="O-linked (GalNAc...) threonine; by host" evidence="1">
    <location>
        <position position="80"/>
    </location>
</feature>
<feature type="glycosylation site" description="O-linked (GalNAc...) threonine; by host" evidence="1">
    <location>
        <position position="86"/>
    </location>
</feature>
<feature type="glycosylation site" description="O-linked (GalNAc...) threonine; by host" evidence="1">
    <location>
        <position position="87"/>
    </location>
</feature>
<feature type="glycosylation site" description="O-linked (GalNAc...) threonine; by host" evidence="1">
    <location>
        <position position="92"/>
    </location>
</feature>
<feature type="glycosylation site" description="O-linked (GalNAc...) serine; by host" evidence="3">
    <location>
        <position position="100"/>
    </location>
</feature>
<feature type="glycosylation site" description="O-linked (GalNAc...) serine; by host" evidence="3">
    <location>
        <position position="105"/>
    </location>
</feature>
<feature type="glycosylation site" description="O-linked (GalNAc...) threonine; by host" evidence="3">
    <location>
        <position position="113"/>
    </location>
</feature>
<feature type="glycosylation site" description="O-linked (GalNAc...) threonine; by host" evidence="3">
    <location>
        <position position="119"/>
    </location>
</feature>
<feature type="glycosylation site" description="N-linked (GlcNAc...) asparagine; by host" evidence="3">
    <location>
        <position position="135"/>
    </location>
</feature>
<feature type="glycosylation site" description="O-linked (GalNAc...) threonine; by host" evidence="3">
    <location>
        <position position="137"/>
    </location>
</feature>
<feature type="glycosylation site" description="O-linked (GalNAc...) threonine; by host" evidence="3">
    <location>
        <position position="138"/>
    </location>
</feature>
<feature type="glycosylation site" description="O-linked (GalNAc...) threonine; by host" evidence="3">
    <location>
        <position position="139"/>
    </location>
</feature>
<feature type="glycosylation site" description="N-linked (GlcNAc...) asparagine; by host" evidence="3">
    <location>
        <position position="144"/>
    </location>
</feature>
<feature type="glycosylation site" description="O-linked (GalNAc...) threonine; by host" evidence="3">
    <location>
        <position position="147"/>
    </location>
</feature>
<feature type="glycosylation site" description="O-linked (GalNAc...) threonine; by host" evidence="3">
    <location>
        <position position="199"/>
    </location>
</feature>
<feature type="glycosylation site" description="O-linked (GalNAc...) threonine; by host" evidence="3">
    <location>
        <position position="203"/>
    </location>
</feature>
<feature type="glycosylation site" description="O-linked (GalNAc...) threonine; by host" evidence="3">
    <location>
        <position position="219"/>
    </location>
</feature>
<feature type="glycosylation site" description="O-linked (GalNAc...) threonine; by host" evidence="3">
    <location>
        <position position="231"/>
    </location>
</feature>
<feature type="glycosylation site" description="O-linked (GalNAc...) threonine; by host" evidence="3">
    <location>
        <position position="235"/>
    </location>
</feature>
<feature type="glycosylation site" description="N-linked (GlcNAc...) asparagine; by host" evidence="3">
    <location>
        <position position="237"/>
    </location>
</feature>
<feature type="glycosylation site" description="N-linked (GlcNAc...) asparagine; by host" evidence="3">
    <location>
        <position position="251"/>
    </location>
</feature>
<feature type="glycosylation site" description="O-linked (GalNAc...) serine; by host" evidence="3">
    <location>
        <position position="269"/>
    </location>
</feature>
<feature type="glycosylation site" description="O-linked (GlcNAc...) serine; by host" evidence="3">
    <location>
        <position position="270"/>
    </location>
</feature>
<feature type="glycosylation site" description="O-linked (GalNAc...) serine; by host" evidence="3">
    <location>
        <position position="275"/>
    </location>
</feature>
<feature type="glycosylation site" description="O-linked (GalNAc...) threonine; by host" evidence="3">
    <location>
        <position position="282"/>
    </location>
</feature>
<feature type="glycosylation site" description="O-linked (GalNAc...) serine; by host" evidence="3">
    <location>
        <position position="283"/>
    </location>
</feature>
<feature type="glycosylation site" description="O-linked (GalNAc...) serine; by host" evidence="3">
    <location>
        <position position="290"/>
    </location>
</feature>
<feature type="disulfide bond" evidence="1">
    <location>
        <begin position="173"/>
        <end position="186"/>
    </location>
</feature>
<feature type="disulfide bond" evidence="1">
    <location>
        <begin position="176"/>
        <end position="182"/>
    </location>
</feature>
<feature type="splice variant" id="VSP_036526" description="In isoform Secreted glycoprotein G." evidence="1">
    <location>
        <begin position="1"/>
        <end position="47"/>
    </location>
</feature>
<sequence length="297" mass="32745">MSKNKDQRTAKTLERTWDTLNHLLFISSCLYKLNLKSVAQITLSILAMIISTSLIIAAIIFIASANHRVTSTTTIIQDATNQIKNTTPTYLTQNPQLGISPSNPSEITSLITTILDPTTPGVKLTLQSTTVRIKNTTTTQAQPNKSTTKQRQNKPPSKPNNDFHFEVFNFVPCSICSNNPTCWAICKRIPNKKPGKRTTTKPTKKPTLKTTKKDPKPQTTKSEEVPTTKLTEEPTINTTKTNIITTPLTSNTARNPELTSQMETFHSTSSEGNPSPSQVSITSEYPPQPSSPPNTPR</sequence>
<organism>
    <name type="scientific">Human respiratory syncytial virus A (strain rsb642)</name>
    <dbReference type="NCBI Taxonomy" id="11252"/>
    <lineage>
        <taxon>Viruses</taxon>
        <taxon>Riboviria</taxon>
        <taxon>Orthornavirae</taxon>
        <taxon>Negarnaviricota</taxon>
        <taxon>Haploviricotina</taxon>
        <taxon>Monjiviricetes</taxon>
        <taxon>Mononegavirales</taxon>
        <taxon>Pneumoviridae</taxon>
        <taxon>Orthopneumovirus</taxon>
        <taxon>Orthopneumovirus hominis</taxon>
    </lineage>
</organism>
<gene>
    <name type="primary">G</name>
</gene>
<comment type="function">
    <molecule>Isoform Membrane-bound glycoprotein G</molecule>
    <text evidence="1">Attaches the virion to the host cell membrane by interacting with heparan sulfate, initiating the infection. Interacts with host CX3CR1, the receptor for the CX3C chemokine fractalkine, to modulate the immune response and facilitate infection. Unlike the other paramyxovirus attachment proteins, lacks both neuraminidase and hemagglutinating activities.</text>
</comment>
<comment type="function">
    <molecule>Isoform Secreted glycoprotein G</molecule>
    <text evidence="1">Helps the virus escape antibody-dependent restriction of replication by acting as an antigen decoy and by modulating the activity of leukocytes bearing Fc-gamma receptors.</text>
</comment>
<comment type="subunit">
    <molecule>Isoform Membrane-bound glycoprotein G</molecule>
    <text evidence="1">Homooligomer. Interacts (via N-terminus) with protein M. Part of a complex composed of F1, F2 and G glycoproteins. Interacts with protein SH. Interacts with host heparate sulfate; this interaction probably participates in the viral attachment to the host cell. Interacts with host CX3CR1; this interaction plays an important role in viral entry. Interacts with the host lectins CD209/DC-SIGN and CD209L/L-SIGN on dendritic cells; these interactions stimulate the phosphorylation of MAPK3/ERK1 and MAPK1/ERK2, which inhibits dendritic cell activation and could participate in the limited immunity against RSV reinfection.</text>
</comment>
<comment type="subcellular location">
    <molecule>Isoform Membrane-bound glycoprotein G</molecule>
    <subcellularLocation>
        <location evidence="1">Virion membrane</location>
        <topology evidence="1">Single-pass type II membrane protein</topology>
    </subcellularLocation>
    <subcellularLocation>
        <location evidence="1">Host cell membrane</location>
        <topology evidence="1">Single-pass type II membrane protein</topology>
    </subcellularLocation>
</comment>
<comment type="subcellular location">
    <molecule>Isoform Secreted glycoprotein G</molecule>
    <subcellularLocation>
        <location evidence="2">Secreted</location>
    </subcellularLocation>
    <text evidence="2">The protein is shed from infected cells before the appearance of progeny virus. The initiation at the downstream methionine removes a portion of the transmembrane domain. The remaining hydrophobic portion of the sG protein is essential for translocating it into the lumen of the ER during translation and would likely maintain its membrane association until a proteolytic event releases the mature sG protein into the medium.</text>
</comment>
<comment type="alternative products">
    <event type="alternative initiation"/>
    <isoform>
        <id>P27021-1</id>
        <name>Membrane-bound glycoprotein G</name>
        <sequence type="displayed"/>
    </isoform>
    <isoform>
        <id>P27021-2</id>
        <name>Secreted glycoprotein G</name>
        <sequence type="described" ref="VSP_036526"/>
    </isoform>
</comment>
<comment type="domain">
    <molecule>Isoform Membrane-bound glycoprotein G</molecule>
    <text evidence="1">Contains a linear heparin binding domain essential for virus attachment to the host.</text>
</comment>
<comment type="PTM">
    <molecule>Isoform Secreted glycoprotein G</molecule>
    <text evidence="2">Cleaved to give rise to the mature sG protein which lacks the transmembrane domain.</text>
</comment>
<comment type="PTM">
    <molecule>Isoform Membrane-bound glycoprotein G</molecule>
    <text evidence="1">N- and O-glycosylated. May carry 30-40 separate O-linked carbohydrate chains distributed among the 91 serine and threonine residues.</text>
</comment>
<comment type="PTM">
    <molecule>Isoform Membrane-bound glycoprotein G</molecule>
    <text evidence="1">Palmitoylated.</text>
</comment>
<comment type="similarity">
    <text evidence="5">Belongs to the pneumoviruses glycoprotein G family.</text>
</comment>
<name>GLYC_HRSV2</name>
<dbReference type="PIR" id="JQ1204">
    <property type="entry name" value="JQ1204"/>
</dbReference>
<dbReference type="SMR" id="P27021"/>
<dbReference type="GlyCosmos" id="P27021">
    <property type="glycosylation" value="29 sites, No reported glycans"/>
</dbReference>
<dbReference type="GO" id="GO:0005576">
    <property type="term" value="C:extracellular region"/>
    <property type="evidence" value="ECO:0007669"/>
    <property type="project" value="UniProtKB-SubCell"/>
</dbReference>
<dbReference type="GO" id="GO:0020002">
    <property type="term" value="C:host cell plasma membrane"/>
    <property type="evidence" value="ECO:0007669"/>
    <property type="project" value="UniProtKB-SubCell"/>
</dbReference>
<dbReference type="GO" id="GO:0016020">
    <property type="term" value="C:membrane"/>
    <property type="evidence" value="ECO:0007669"/>
    <property type="project" value="UniProtKB-KW"/>
</dbReference>
<dbReference type="GO" id="GO:0055036">
    <property type="term" value="C:virion membrane"/>
    <property type="evidence" value="ECO:0007669"/>
    <property type="project" value="UniProtKB-SubCell"/>
</dbReference>
<dbReference type="GO" id="GO:0046718">
    <property type="term" value="P:symbiont entry into host cell"/>
    <property type="evidence" value="ECO:0007669"/>
    <property type="project" value="UniProtKB-KW"/>
</dbReference>
<dbReference type="GO" id="GO:0019062">
    <property type="term" value="P:virion attachment to host cell"/>
    <property type="evidence" value="ECO:0007669"/>
    <property type="project" value="UniProtKB-KW"/>
</dbReference>
<dbReference type="InterPro" id="IPR000925">
    <property type="entry name" value="G_prot"/>
</dbReference>
<dbReference type="Pfam" id="PF00802">
    <property type="entry name" value="Glycoprotein_G"/>
    <property type="match status" value="1"/>
</dbReference>
<proteinExistence type="inferred from homology"/>
<protein>
    <recommendedName>
        <fullName>Major surface glycoprotein G</fullName>
    </recommendedName>
    <alternativeName>
        <fullName>Attachment glycoprotein G</fullName>
    </alternativeName>
    <alternativeName>
        <fullName>Membrane-bound glycoprotein</fullName>
        <shortName>mG</shortName>
    </alternativeName>
    <component>
        <recommendedName>
            <fullName evidence="2">Mature secreted glycoprotein G</fullName>
            <shortName evidence="2">Mature sG</shortName>
        </recommendedName>
    </component>
</protein>
<reference key="1">
    <citation type="journal article" date="1991" name="J. Gen. Virol.">
        <title>Identification of variable domains of the attachment (G) protein of subgroup A respiratory syncytial viruses.</title>
        <authorList>
            <person name="Cane P.A."/>
            <person name="Matthews D.A."/>
            <person name="Pringle C.R."/>
        </authorList>
    </citation>
    <scope>NUCLEOTIDE SEQUENCE</scope>
</reference>
<evidence type="ECO:0000250" key="1">
    <source>
        <dbReference type="UniProtKB" id="P03423"/>
    </source>
</evidence>
<evidence type="ECO:0000250" key="2">
    <source>
        <dbReference type="UniProtKB" id="P20895"/>
    </source>
</evidence>
<evidence type="ECO:0000255" key="3"/>
<evidence type="ECO:0000256" key="4">
    <source>
        <dbReference type="SAM" id="MobiDB-lite"/>
    </source>
</evidence>
<evidence type="ECO:0000305" key="5"/>
<accession>P27021</accession>
<keyword id="KW-0024">Alternative initiation</keyword>
<keyword id="KW-1015">Disulfide bond</keyword>
<keyword id="KW-0325">Glycoprotein</keyword>
<keyword id="KW-1032">Host cell membrane</keyword>
<keyword id="KW-1043">Host membrane</keyword>
<keyword id="KW-0945">Host-virus interaction</keyword>
<keyword id="KW-0472">Membrane</keyword>
<keyword id="KW-0964">Secreted</keyword>
<keyword id="KW-0812">Transmembrane</keyword>
<keyword id="KW-1133">Transmembrane helix</keyword>
<keyword id="KW-1161">Viral attachment to host cell</keyword>
<keyword id="KW-0899">Viral immunoevasion</keyword>
<keyword id="KW-0946">Virion</keyword>
<keyword id="KW-1160">Virus entry into host cell</keyword>